<gene>
    <name evidence="1" type="primary">rplA</name>
    <name type="ordered locus">Spro_0274</name>
</gene>
<organism>
    <name type="scientific">Serratia proteamaculans (strain 568)</name>
    <dbReference type="NCBI Taxonomy" id="399741"/>
    <lineage>
        <taxon>Bacteria</taxon>
        <taxon>Pseudomonadati</taxon>
        <taxon>Pseudomonadota</taxon>
        <taxon>Gammaproteobacteria</taxon>
        <taxon>Enterobacterales</taxon>
        <taxon>Yersiniaceae</taxon>
        <taxon>Serratia</taxon>
    </lineage>
</organism>
<feature type="chain" id="PRO_1000067532" description="Large ribosomal subunit protein uL1">
    <location>
        <begin position="1"/>
        <end position="234"/>
    </location>
</feature>
<protein>
    <recommendedName>
        <fullName evidence="1">Large ribosomal subunit protein uL1</fullName>
    </recommendedName>
    <alternativeName>
        <fullName evidence="2">50S ribosomal protein L1</fullName>
    </alternativeName>
</protein>
<proteinExistence type="inferred from homology"/>
<accession>A8G8E4</accession>
<dbReference type="EMBL" id="CP000826">
    <property type="protein sequence ID" value="ABV39384.1"/>
    <property type="molecule type" value="Genomic_DNA"/>
</dbReference>
<dbReference type="SMR" id="A8G8E4"/>
<dbReference type="STRING" id="399741.Spro_0274"/>
<dbReference type="KEGG" id="spe:Spro_0274"/>
<dbReference type="eggNOG" id="COG0081">
    <property type="taxonomic scope" value="Bacteria"/>
</dbReference>
<dbReference type="HOGENOM" id="CLU_062853_0_0_6"/>
<dbReference type="OrthoDB" id="9803740at2"/>
<dbReference type="GO" id="GO:0022625">
    <property type="term" value="C:cytosolic large ribosomal subunit"/>
    <property type="evidence" value="ECO:0007669"/>
    <property type="project" value="TreeGrafter"/>
</dbReference>
<dbReference type="GO" id="GO:0019843">
    <property type="term" value="F:rRNA binding"/>
    <property type="evidence" value="ECO:0007669"/>
    <property type="project" value="UniProtKB-UniRule"/>
</dbReference>
<dbReference type="GO" id="GO:0003735">
    <property type="term" value="F:structural constituent of ribosome"/>
    <property type="evidence" value="ECO:0007669"/>
    <property type="project" value="InterPro"/>
</dbReference>
<dbReference type="GO" id="GO:0000049">
    <property type="term" value="F:tRNA binding"/>
    <property type="evidence" value="ECO:0007669"/>
    <property type="project" value="UniProtKB-KW"/>
</dbReference>
<dbReference type="GO" id="GO:0006417">
    <property type="term" value="P:regulation of translation"/>
    <property type="evidence" value="ECO:0007669"/>
    <property type="project" value="UniProtKB-KW"/>
</dbReference>
<dbReference type="GO" id="GO:0006412">
    <property type="term" value="P:translation"/>
    <property type="evidence" value="ECO:0007669"/>
    <property type="project" value="UniProtKB-UniRule"/>
</dbReference>
<dbReference type="CDD" id="cd00403">
    <property type="entry name" value="Ribosomal_L1"/>
    <property type="match status" value="1"/>
</dbReference>
<dbReference type="FunFam" id="3.40.50.790:FF:000001">
    <property type="entry name" value="50S ribosomal protein L1"/>
    <property type="match status" value="1"/>
</dbReference>
<dbReference type="Gene3D" id="3.30.190.20">
    <property type="match status" value="1"/>
</dbReference>
<dbReference type="Gene3D" id="3.40.50.790">
    <property type="match status" value="1"/>
</dbReference>
<dbReference type="HAMAP" id="MF_01318_B">
    <property type="entry name" value="Ribosomal_uL1_B"/>
    <property type="match status" value="1"/>
</dbReference>
<dbReference type="InterPro" id="IPR005878">
    <property type="entry name" value="Ribosom_uL1_bac-type"/>
</dbReference>
<dbReference type="InterPro" id="IPR002143">
    <property type="entry name" value="Ribosomal_uL1"/>
</dbReference>
<dbReference type="InterPro" id="IPR023674">
    <property type="entry name" value="Ribosomal_uL1-like"/>
</dbReference>
<dbReference type="InterPro" id="IPR028364">
    <property type="entry name" value="Ribosomal_uL1/biogenesis"/>
</dbReference>
<dbReference type="InterPro" id="IPR016095">
    <property type="entry name" value="Ribosomal_uL1_3-a/b-sand"/>
</dbReference>
<dbReference type="InterPro" id="IPR023673">
    <property type="entry name" value="Ribosomal_uL1_CS"/>
</dbReference>
<dbReference type="NCBIfam" id="TIGR01169">
    <property type="entry name" value="rplA_bact"/>
    <property type="match status" value="1"/>
</dbReference>
<dbReference type="PANTHER" id="PTHR36427">
    <property type="entry name" value="54S RIBOSOMAL PROTEIN L1, MITOCHONDRIAL"/>
    <property type="match status" value="1"/>
</dbReference>
<dbReference type="PANTHER" id="PTHR36427:SF3">
    <property type="entry name" value="LARGE RIBOSOMAL SUBUNIT PROTEIN UL1M"/>
    <property type="match status" value="1"/>
</dbReference>
<dbReference type="Pfam" id="PF00687">
    <property type="entry name" value="Ribosomal_L1"/>
    <property type="match status" value="1"/>
</dbReference>
<dbReference type="PIRSF" id="PIRSF002155">
    <property type="entry name" value="Ribosomal_L1"/>
    <property type="match status" value="1"/>
</dbReference>
<dbReference type="SUPFAM" id="SSF56808">
    <property type="entry name" value="Ribosomal protein L1"/>
    <property type="match status" value="1"/>
</dbReference>
<dbReference type="PROSITE" id="PS01199">
    <property type="entry name" value="RIBOSOMAL_L1"/>
    <property type="match status" value="1"/>
</dbReference>
<reference key="1">
    <citation type="submission" date="2007-09" db="EMBL/GenBank/DDBJ databases">
        <title>Complete sequence of chromosome of Serratia proteamaculans 568.</title>
        <authorList>
            <consortium name="US DOE Joint Genome Institute"/>
            <person name="Copeland A."/>
            <person name="Lucas S."/>
            <person name="Lapidus A."/>
            <person name="Barry K."/>
            <person name="Glavina del Rio T."/>
            <person name="Dalin E."/>
            <person name="Tice H."/>
            <person name="Pitluck S."/>
            <person name="Chain P."/>
            <person name="Malfatti S."/>
            <person name="Shin M."/>
            <person name="Vergez L."/>
            <person name="Schmutz J."/>
            <person name="Larimer F."/>
            <person name="Land M."/>
            <person name="Hauser L."/>
            <person name="Kyrpides N."/>
            <person name="Kim E."/>
            <person name="Taghavi S."/>
            <person name="Newman L."/>
            <person name="Vangronsveld J."/>
            <person name="van der Lelie D."/>
            <person name="Richardson P."/>
        </authorList>
    </citation>
    <scope>NUCLEOTIDE SEQUENCE [LARGE SCALE GENOMIC DNA]</scope>
    <source>
        <strain>568</strain>
    </source>
</reference>
<comment type="function">
    <text evidence="1">Binds directly to 23S rRNA. The L1 stalk is quite mobile in the ribosome, and is involved in E site tRNA release.</text>
</comment>
<comment type="function">
    <text evidence="1">Protein L1 is also a translational repressor protein, it controls the translation of the L11 operon by binding to its mRNA.</text>
</comment>
<comment type="subunit">
    <text evidence="1">Part of the 50S ribosomal subunit.</text>
</comment>
<comment type="similarity">
    <text evidence="1">Belongs to the universal ribosomal protein uL1 family.</text>
</comment>
<keyword id="KW-0678">Repressor</keyword>
<keyword id="KW-0687">Ribonucleoprotein</keyword>
<keyword id="KW-0689">Ribosomal protein</keyword>
<keyword id="KW-0694">RNA-binding</keyword>
<keyword id="KW-0699">rRNA-binding</keyword>
<keyword id="KW-0810">Translation regulation</keyword>
<keyword id="KW-0820">tRNA-binding</keyword>
<sequence>MAKLTKRMRVIRDKVDATKQYDITEAVALLKELATAKFVESVDVAVNLGIDARKSDQNVRGATVLPNGTGRSVRVAVFAQGPNAEAAKAAGAELVGMEDLADQIKKGEMNFDVVIASPDAMRVVGQLGQILGPRGLMPNPKVGTVTPNVAEAVKNAKAGQVRYRNDKNGIIHTTIGKVDFESDKLKENLEALLVALKKAKPSQAKGVYIKKVSLSTTMGAGVAIDQSGLTAVAN</sequence>
<evidence type="ECO:0000255" key="1">
    <source>
        <dbReference type="HAMAP-Rule" id="MF_01318"/>
    </source>
</evidence>
<evidence type="ECO:0000305" key="2"/>
<name>RL1_SERP5</name>